<sequence>MTGSIRSSTAGIDVRQLGSVDYQTAWQMQRDLADARVAGGPDTLLLLQHPAVYTAGRRTEPHERPGPVFAGAAGDEAIDVVDTDRGGKITWHGPGQLVGYPIIRLAQPLDVVNYVRRLEESLIKVSLDLGLETRRVEGRSGVWIPAGSGRPERKIAAIGVRVSRATTLHGFALNCDCDLAAFTAIVPCGISDAGVTSLSAELGRTVGVEEVRGAVADAVCNALDGALPVRDHPGARVASST</sequence>
<proteinExistence type="inferred from homology"/>
<reference key="1">
    <citation type="journal article" date="2007" name="Genome Res.">
        <title>Reductive evolution and niche adaptation inferred from the genome of Mycobacterium ulcerans, the causative agent of Buruli ulcer.</title>
        <authorList>
            <person name="Stinear T.P."/>
            <person name="Seemann T."/>
            <person name="Pidot S."/>
            <person name="Frigui W."/>
            <person name="Reysset G."/>
            <person name="Garnier T."/>
            <person name="Meurice G."/>
            <person name="Simon D."/>
            <person name="Bouchier C."/>
            <person name="Ma L."/>
            <person name="Tichit M."/>
            <person name="Porter J.L."/>
            <person name="Ryan J."/>
            <person name="Johnson P.D.R."/>
            <person name="Davies J.K."/>
            <person name="Jenkin G.A."/>
            <person name="Small P.L.C."/>
            <person name="Jones L.M."/>
            <person name="Tekaia F."/>
            <person name="Laval F."/>
            <person name="Daffe M."/>
            <person name="Parkhill J."/>
            <person name="Cole S.T."/>
        </authorList>
    </citation>
    <scope>NUCLEOTIDE SEQUENCE [LARGE SCALE GENOMIC DNA]</scope>
    <source>
        <strain>Agy99</strain>
    </source>
</reference>
<gene>
    <name evidence="1" type="primary">lipB</name>
    <name type="ordered locus">MUL_1344</name>
</gene>
<protein>
    <recommendedName>
        <fullName evidence="1">Octanoyltransferase</fullName>
        <ecNumber evidence="1">2.3.1.181</ecNumber>
    </recommendedName>
    <alternativeName>
        <fullName evidence="1">Lipoate-protein ligase B</fullName>
    </alternativeName>
    <alternativeName>
        <fullName evidence="1">Lipoyl/octanoyl transferase</fullName>
    </alternativeName>
    <alternativeName>
        <fullName evidence="1">Octanoyl-[acyl-carrier-protein]-protein N-octanoyltransferase</fullName>
    </alternativeName>
</protein>
<comment type="function">
    <text evidence="1">Catalyzes the transfer of endogenously produced octanoic acid from octanoyl-acyl-carrier-protein onto the lipoyl domains of lipoate-dependent enzymes. Lipoyl-ACP can also act as a substrate although octanoyl-ACP is likely to be the physiological substrate.</text>
</comment>
<comment type="catalytic activity">
    <reaction evidence="1">
        <text>octanoyl-[ACP] + L-lysyl-[protein] = N(6)-octanoyl-L-lysyl-[protein] + holo-[ACP] + H(+)</text>
        <dbReference type="Rhea" id="RHEA:17665"/>
        <dbReference type="Rhea" id="RHEA-COMP:9636"/>
        <dbReference type="Rhea" id="RHEA-COMP:9685"/>
        <dbReference type="Rhea" id="RHEA-COMP:9752"/>
        <dbReference type="Rhea" id="RHEA-COMP:9928"/>
        <dbReference type="ChEBI" id="CHEBI:15378"/>
        <dbReference type="ChEBI" id="CHEBI:29969"/>
        <dbReference type="ChEBI" id="CHEBI:64479"/>
        <dbReference type="ChEBI" id="CHEBI:78463"/>
        <dbReference type="ChEBI" id="CHEBI:78809"/>
        <dbReference type="EC" id="2.3.1.181"/>
    </reaction>
</comment>
<comment type="pathway">
    <text evidence="1">Protein modification; protein lipoylation via endogenous pathway; protein N(6)-(lipoyl)lysine from octanoyl-[acyl-carrier-protein]: step 1/2.</text>
</comment>
<comment type="subcellular location">
    <subcellularLocation>
        <location evidence="1">Cytoplasm</location>
    </subcellularLocation>
</comment>
<comment type="miscellaneous">
    <text evidence="1">In the reaction, the free carboxyl group of octanoic acid is attached via an amide linkage to the epsilon-amino group of a specific lysine residue of lipoyl domains of lipoate-dependent enzymes.</text>
</comment>
<comment type="similarity">
    <text evidence="1">Belongs to the LipB family.</text>
</comment>
<name>LIPB_MYCUA</name>
<feature type="chain" id="PRO_1000001111" description="Octanoyltransferase">
    <location>
        <begin position="1"/>
        <end position="241"/>
    </location>
</feature>
<feature type="domain" description="BPL/LPL catalytic" evidence="2">
    <location>
        <begin position="38"/>
        <end position="227"/>
    </location>
</feature>
<feature type="active site" description="Acyl-thioester intermediate" evidence="1">
    <location>
        <position position="188"/>
    </location>
</feature>
<feature type="binding site" evidence="1">
    <location>
        <begin position="85"/>
        <end position="92"/>
    </location>
    <ligand>
        <name>substrate</name>
    </ligand>
</feature>
<feature type="binding site" evidence="1">
    <location>
        <begin position="157"/>
        <end position="159"/>
    </location>
    <ligand>
        <name>substrate</name>
    </ligand>
</feature>
<feature type="binding site" evidence="1">
    <location>
        <begin position="170"/>
        <end position="172"/>
    </location>
    <ligand>
        <name>substrate</name>
    </ligand>
</feature>
<feature type="site" description="Lowers pKa of active site Cys" evidence="1">
    <location>
        <position position="154"/>
    </location>
</feature>
<evidence type="ECO:0000255" key="1">
    <source>
        <dbReference type="HAMAP-Rule" id="MF_00013"/>
    </source>
</evidence>
<evidence type="ECO:0000255" key="2">
    <source>
        <dbReference type="PROSITE-ProRule" id="PRU01067"/>
    </source>
</evidence>
<keyword id="KW-0012">Acyltransferase</keyword>
<keyword id="KW-0963">Cytoplasm</keyword>
<keyword id="KW-0808">Transferase</keyword>
<accession>A0PNH8</accession>
<organism>
    <name type="scientific">Mycobacterium ulcerans (strain Agy99)</name>
    <dbReference type="NCBI Taxonomy" id="362242"/>
    <lineage>
        <taxon>Bacteria</taxon>
        <taxon>Bacillati</taxon>
        <taxon>Actinomycetota</taxon>
        <taxon>Actinomycetes</taxon>
        <taxon>Mycobacteriales</taxon>
        <taxon>Mycobacteriaceae</taxon>
        <taxon>Mycobacterium</taxon>
        <taxon>Mycobacterium ulcerans group</taxon>
    </lineage>
</organism>
<dbReference type="EC" id="2.3.1.181" evidence="1"/>
<dbReference type="EMBL" id="CP000325">
    <property type="protein sequence ID" value="ABL03897.1"/>
    <property type="molecule type" value="Genomic_DNA"/>
</dbReference>
<dbReference type="RefSeq" id="WP_011739518.1">
    <property type="nucleotide sequence ID" value="NC_008611.1"/>
</dbReference>
<dbReference type="SMR" id="A0PNH8"/>
<dbReference type="KEGG" id="mul:MUL_1344"/>
<dbReference type="eggNOG" id="COG0321">
    <property type="taxonomic scope" value="Bacteria"/>
</dbReference>
<dbReference type="HOGENOM" id="CLU_035168_2_1_11"/>
<dbReference type="UniPathway" id="UPA00538">
    <property type="reaction ID" value="UER00592"/>
</dbReference>
<dbReference type="Proteomes" id="UP000000765">
    <property type="component" value="Chromosome"/>
</dbReference>
<dbReference type="GO" id="GO:0005737">
    <property type="term" value="C:cytoplasm"/>
    <property type="evidence" value="ECO:0007669"/>
    <property type="project" value="UniProtKB-SubCell"/>
</dbReference>
<dbReference type="GO" id="GO:0033819">
    <property type="term" value="F:lipoyl(octanoyl) transferase activity"/>
    <property type="evidence" value="ECO:0007669"/>
    <property type="project" value="UniProtKB-EC"/>
</dbReference>
<dbReference type="GO" id="GO:0036211">
    <property type="term" value="P:protein modification process"/>
    <property type="evidence" value="ECO:0007669"/>
    <property type="project" value="InterPro"/>
</dbReference>
<dbReference type="CDD" id="cd16444">
    <property type="entry name" value="LipB"/>
    <property type="match status" value="1"/>
</dbReference>
<dbReference type="FunFam" id="3.30.930.10:FF:000035">
    <property type="entry name" value="Putative lipoyltransferase 2, mitochondrial"/>
    <property type="match status" value="1"/>
</dbReference>
<dbReference type="Gene3D" id="3.30.930.10">
    <property type="entry name" value="Bira Bifunctional Protein, Domain 2"/>
    <property type="match status" value="1"/>
</dbReference>
<dbReference type="HAMAP" id="MF_00013">
    <property type="entry name" value="LipB"/>
    <property type="match status" value="1"/>
</dbReference>
<dbReference type="InterPro" id="IPR045864">
    <property type="entry name" value="aa-tRNA-synth_II/BPL/LPL"/>
</dbReference>
<dbReference type="InterPro" id="IPR004143">
    <property type="entry name" value="BPL_LPL_catalytic"/>
</dbReference>
<dbReference type="InterPro" id="IPR000544">
    <property type="entry name" value="Octanoyltransferase"/>
</dbReference>
<dbReference type="InterPro" id="IPR020605">
    <property type="entry name" value="Octanoyltransferase_CS"/>
</dbReference>
<dbReference type="NCBIfam" id="TIGR00214">
    <property type="entry name" value="lipB"/>
    <property type="match status" value="1"/>
</dbReference>
<dbReference type="NCBIfam" id="NF010925">
    <property type="entry name" value="PRK14345.1"/>
    <property type="match status" value="1"/>
</dbReference>
<dbReference type="PANTHER" id="PTHR10993:SF7">
    <property type="entry name" value="LIPOYLTRANSFERASE 2, MITOCHONDRIAL-RELATED"/>
    <property type="match status" value="1"/>
</dbReference>
<dbReference type="PANTHER" id="PTHR10993">
    <property type="entry name" value="OCTANOYLTRANSFERASE"/>
    <property type="match status" value="1"/>
</dbReference>
<dbReference type="Pfam" id="PF21948">
    <property type="entry name" value="LplA-B_cat"/>
    <property type="match status" value="1"/>
</dbReference>
<dbReference type="PIRSF" id="PIRSF016262">
    <property type="entry name" value="LPLase"/>
    <property type="match status" value="1"/>
</dbReference>
<dbReference type="SUPFAM" id="SSF55681">
    <property type="entry name" value="Class II aaRS and biotin synthetases"/>
    <property type="match status" value="1"/>
</dbReference>
<dbReference type="PROSITE" id="PS51733">
    <property type="entry name" value="BPL_LPL_CATALYTIC"/>
    <property type="match status" value="1"/>
</dbReference>
<dbReference type="PROSITE" id="PS01313">
    <property type="entry name" value="LIPB"/>
    <property type="match status" value="1"/>
</dbReference>